<protein>
    <recommendedName>
        <fullName>Protein UL40</fullName>
    </recommendedName>
</protein>
<organismHost>
    <name type="scientific">Homo sapiens</name>
    <name type="common">Human</name>
    <dbReference type="NCBI Taxonomy" id="9606"/>
</organismHost>
<reference key="1">
    <citation type="journal article" date="2004" name="J. Gen. Virol.">
        <title>Genetic content of wild-type human cytomegalovirus.</title>
        <authorList>
            <person name="Dolan A."/>
            <person name="Cunningham C."/>
            <person name="Hector R.D."/>
            <person name="Hassan-Walker A.F."/>
            <person name="Lee L."/>
            <person name="Addison C."/>
            <person name="Dargan D.J."/>
            <person name="McGeoch D.J."/>
            <person name="Gatherer D."/>
            <person name="Emery V.C."/>
            <person name="Griffiths P.D."/>
            <person name="Sinzger C."/>
            <person name="McSharry B.P."/>
            <person name="Wilkinson G.W.G."/>
            <person name="Davison A.J."/>
        </authorList>
    </citation>
    <scope>NUCLEOTIDE SEQUENCE [LARGE SCALE GENOMIC DNA]</scope>
</reference>
<dbReference type="EMBL" id="AY446894">
    <property type="protein sequence ID" value="AAR31604.1"/>
    <property type="molecule type" value="Genomic_DNA"/>
</dbReference>
<dbReference type="RefSeq" id="YP_081498.1">
    <property type="nucleotide sequence ID" value="NC_006273.2"/>
</dbReference>
<dbReference type="DNASU" id="3077540"/>
<dbReference type="GeneID" id="3077540"/>
<dbReference type="KEGG" id="vg:3077540"/>
<dbReference type="Proteomes" id="UP000000938">
    <property type="component" value="Segment"/>
</dbReference>
<dbReference type="GO" id="GO:0039671">
    <property type="term" value="P:symbiont-mediated perturbation of host natural killer cell mediated immune response"/>
    <property type="evidence" value="ECO:0007669"/>
    <property type="project" value="UniProtKB-KW"/>
</dbReference>
<dbReference type="InterPro" id="IPR019624">
    <property type="entry name" value="Herpes_UL40"/>
</dbReference>
<dbReference type="Pfam" id="PF10682">
    <property type="entry name" value="UL40"/>
    <property type="match status" value="1"/>
</dbReference>
<gene>
    <name type="primary">UL40</name>
</gene>
<sequence length="221" mass="24366">MNKFSNTRIGFTCAVMAPRTLILTVGLLCMRIRSLLSSPVETTVTTAGVTSAHGPLCPLVFQGWAYAVYHQGDMVLMTLDVYCCRQTSSNTVVAFSHHPADNTLLIEVGNNTRRHVDGISCQDHFRAQHQDCPAQTVHVRGVNESAFGLTHLQSCCLNEHSQLSERVAYHLKLRPATFGLETWAMYTVGILALGSFSSFYSQIARSLGVLPNDHHYALKKA</sequence>
<evidence type="ECO:0000250" key="1"/>
<evidence type="ECO:0000255" key="2"/>
<evidence type="ECO:0000305" key="3"/>
<organism>
    <name type="scientific">Human cytomegalovirus (strain Merlin)</name>
    <name type="common">HHV-5</name>
    <name type="synonym">Human herpesvirus 5</name>
    <dbReference type="NCBI Taxonomy" id="295027"/>
    <lineage>
        <taxon>Viruses</taxon>
        <taxon>Duplodnaviria</taxon>
        <taxon>Heunggongvirae</taxon>
        <taxon>Peploviricota</taxon>
        <taxon>Herviviricetes</taxon>
        <taxon>Herpesvirales</taxon>
        <taxon>Orthoherpesviridae</taxon>
        <taxon>Betaherpesvirinae</taxon>
        <taxon>Cytomegalovirus</taxon>
        <taxon>Cytomegalovirus humanbeta5</taxon>
        <taxon>Human cytomegalovirus</taxon>
    </lineage>
</organism>
<keyword id="KW-0945">Host-virus interaction</keyword>
<keyword id="KW-1131">Modulation of host NK-cell activity by virus</keyword>
<keyword id="KW-1185">Reference proteome</keyword>
<keyword id="KW-0732">Signal</keyword>
<keyword id="KW-0899">Viral immunoevasion</keyword>
<comment type="function">
    <text evidence="1">Plays a role in the protection against host NK cell cytotoxicity by up-regulating the cell surface expression of HLA-E independent of TAP (HLA-E has an inhibitory effect on the cytotoxic activity of the NK cell). Also promotes cell surface expression of UL18, another viral protein involved in NK cell evasion (By similarity).</text>
</comment>
<comment type="similarity">
    <text evidence="3">Belongs to the HHV-5 UL40 protein family.</text>
</comment>
<proteinExistence type="inferred from homology"/>
<name>UL40_HCMVM</name>
<accession>Q6SW92</accession>
<accession>D2K3K7</accession>
<feature type="signal peptide" evidence="2">
    <location>
        <begin position="1"/>
        <end position="35"/>
    </location>
</feature>
<feature type="chain" id="PRO_0000418285" description="Protein UL40">
    <location>
        <begin position="36"/>
        <end position="221"/>
    </location>
</feature>
<feature type="region of interest" description="HLA-E-binding epitope" evidence="1">
    <location>
        <begin position="15"/>
        <end position="23"/>
    </location>
</feature>